<name>RRG8_YEAS2</name>
<reference key="1">
    <citation type="journal article" date="2009" name="Genome Res.">
        <title>Genome structure of a Saccharomyces cerevisiae strain widely used in bioethanol production.</title>
        <authorList>
            <person name="Argueso J.L."/>
            <person name="Carazzolle M.F."/>
            <person name="Mieczkowski P.A."/>
            <person name="Duarte F.M."/>
            <person name="Netto O.V.C."/>
            <person name="Missawa S.K."/>
            <person name="Galzerani F."/>
            <person name="Costa G.G.L."/>
            <person name="Vidal R.O."/>
            <person name="Noronha M.F."/>
            <person name="Dominska M."/>
            <person name="Andrietta M.G.S."/>
            <person name="Andrietta S.R."/>
            <person name="Cunha A.F."/>
            <person name="Gomes L.H."/>
            <person name="Tavares F.C.A."/>
            <person name="Alcarde A.R."/>
            <person name="Dietrich F.S."/>
            <person name="McCusker J.H."/>
            <person name="Petes T.D."/>
            <person name="Pereira G.A.G."/>
        </authorList>
    </citation>
    <scope>NUCLEOTIDE SEQUENCE [LARGE SCALE GENOMIC DNA]</scope>
    <source>
        <strain>JAY291</strain>
    </source>
</reference>
<feature type="chain" id="PRO_0000405469" description="Required for respiratory growth protein 8, mitochondrial">
    <location>
        <begin position="1"/>
        <end position="277"/>
    </location>
</feature>
<comment type="function">
    <text evidence="1">Required for respiratory activity and maintenance and expression of the mitochondrial genome.</text>
</comment>
<comment type="subcellular location">
    <subcellularLocation>
        <location evidence="1">Mitochondrion</location>
    </subcellularLocation>
</comment>
<comment type="similarity">
    <text evidence="2">Belongs to the RRG8 family.</text>
</comment>
<keyword id="KW-0496">Mitochondrion</keyword>
<sequence>MGLPKSAYKKLLIDCPTRVINKNCAQRVKDVSPLITNFEKWSDKRKKLYFKDEEEMVGHFHLENFNLKNNLYGRLLASPMRAEKISKLKSCRELLIPLKVVPSTGKDQHADKDKLKLVPTLDYSKSYKSSYVLNSASIVQDNLAAATSWFPISVLQTSTPKSLEVDSSTFITEYNANLHAFIKARLSVIPNVGPSSINRVLLICDKRKTPPIEIQVVSHGKGLPITQSVFNLGYLHEPTLEAIVSKDAVTKGIYLDADNDKDLIKHLYSTLLFQSVN</sequence>
<dbReference type="EMBL" id="ACFL01000436">
    <property type="protein sequence ID" value="EEU04400.1"/>
    <property type="molecule type" value="Genomic_DNA"/>
</dbReference>
<dbReference type="Proteomes" id="UP000008073">
    <property type="component" value="Unassembled WGS sequence"/>
</dbReference>
<dbReference type="GO" id="GO:0005739">
    <property type="term" value="C:mitochondrion"/>
    <property type="evidence" value="ECO:0007669"/>
    <property type="project" value="UniProtKB-SubCell"/>
</dbReference>
<dbReference type="GO" id="GO:0000002">
    <property type="term" value="P:mitochondrial genome maintenance"/>
    <property type="evidence" value="ECO:0007669"/>
    <property type="project" value="InterPro"/>
</dbReference>
<dbReference type="InterPro" id="IPR031415">
    <property type="entry name" value="Rrg8"/>
</dbReference>
<dbReference type="Pfam" id="PF17068">
    <property type="entry name" value="RRG8"/>
    <property type="match status" value="1"/>
</dbReference>
<gene>
    <name type="primary">RRG8</name>
    <name type="ORF">C1Q_05337</name>
</gene>
<accession>C7GXS8</accession>
<protein>
    <recommendedName>
        <fullName>Required for respiratory growth protein 8, mitochondrial</fullName>
    </recommendedName>
</protein>
<organism>
    <name type="scientific">Saccharomyces cerevisiae (strain JAY291)</name>
    <name type="common">Baker's yeast</name>
    <dbReference type="NCBI Taxonomy" id="574961"/>
    <lineage>
        <taxon>Eukaryota</taxon>
        <taxon>Fungi</taxon>
        <taxon>Dikarya</taxon>
        <taxon>Ascomycota</taxon>
        <taxon>Saccharomycotina</taxon>
        <taxon>Saccharomycetes</taxon>
        <taxon>Saccharomycetales</taxon>
        <taxon>Saccharomycetaceae</taxon>
        <taxon>Saccharomyces</taxon>
    </lineage>
</organism>
<evidence type="ECO:0000250" key="1"/>
<evidence type="ECO:0000305" key="2"/>
<proteinExistence type="inferred from homology"/>